<accession>P06874</accession>
<protein>
    <recommendedName>
        <fullName>Thermostable neutral protease NprT</fullName>
        <shortName>Thermostable neutral proteinase</shortName>
        <ecNumber>3.4.24.-</ecNumber>
    </recommendedName>
    <alternativeName>
        <fullName>Stearolysin</fullName>
    </alternativeName>
    <alternativeName>
        <fullName>Thermolysin-like protease</fullName>
    </alternativeName>
</protein>
<comment type="function">
    <text evidence="5">Extracellular zinc metalloprotease.</text>
</comment>
<comment type="cofactor">
    <cofactor evidence="7">
        <name>Ca(2+)</name>
        <dbReference type="ChEBI" id="CHEBI:29108"/>
    </cofactor>
    <text evidence="7">Binds 4 Ca(2+) ions per subunit.</text>
</comment>
<comment type="cofactor">
    <cofactor evidence="7">
        <name>Zn(2+)</name>
        <dbReference type="ChEBI" id="CHEBI:29105"/>
    </cofactor>
    <text evidence="7">Binds 1 zinc ion per subunit.</text>
</comment>
<comment type="activity regulation">
    <text>Its casein hydrolytic activity is inhibited almost completely by a chelating agent (EDTA), whereas neither diisopropyl fluorophosphate nor phenylmethylsulfonyl fluoride inhibit the proteolytic activity in vitro.</text>
</comment>
<comment type="biophysicochemical properties">
    <phDependence>
        <text evidence="5">Optimum pH is about 7.</text>
    </phDependence>
    <temperatureDependence>
        <text evidence="5">Thermostable. Retains about 80% of its activity after treatment of 65 degrees Celsius for 30 minutes.</text>
    </temperatureDependence>
</comment>
<comment type="subcellular location">
    <subcellularLocation>
        <location evidence="5">Secreted</location>
    </subcellularLocation>
</comment>
<comment type="similarity">
    <text evidence="6">Belongs to the peptidase M4 family.</text>
</comment>
<organism>
    <name type="scientific">Geobacillus stearothermophilus</name>
    <name type="common">Bacillus stearothermophilus</name>
    <dbReference type="NCBI Taxonomy" id="1422"/>
    <lineage>
        <taxon>Bacteria</taxon>
        <taxon>Bacillati</taxon>
        <taxon>Bacillota</taxon>
        <taxon>Bacilli</taxon>
        <taxon>Bacillales</taxon>
        <taxon>Anoxybacillaceae</taxon>
        <taxon>Geobacillus</taxon>
    </lineage>
</organism>
<evidence type="ECO:0000250" key="1"/>
<evidence type="ECO:0000255" key="2"/>
<evidence type="ECO:0000255" key="3">
    <source>
        <dbReference type="PROSITE-ProRule" id="PRU10095"/>
    </source>
</evidence>
<evidence type="ECO:0000269" key="4">
    <source>
    </source>
</evidence>
<evidence type="ECO:0000269" key="5">
    <source>
    </source>
</evidence>
<evidence type="ECO:0000305" key="6"/>
<evidence type="ECO:0000305" key="7">
    <source>
    </source>
</evidence>
<feature type="signal peptide" evidence="2">
    <location>
        <begin position="1"/>
        <end position="25"/>
    </location>
</feature>
<feature type="propeptide" id="PRO_0000028590" description="Activation peptide" evidence="4">
    <location>
        <begin position="26"/>
        <end position="229"/>
    </location>
</feature>
<feature type="chain" id="PRO_0000028591" description="Thermostable neutral protease NprT">
    <location>
        <begin position="230"/>
        <end position="548"/>
    </location>
</feature>
<feature type="active site" evidence="3">
    <location>
        <position position="375"/>
    </location>
</feature>
<feature type="active site" description="Proton donor" evidence="3">
    <location>
        <position position="463"/>
    </location>
</feature>
<feature type="binding site" evidence="1">
    <location>
        <position position="289"/>
    </location>
    <ligand>
        <name>Ca(2+)</name>
        <dbReference type="ChEBI" id="CHEBI:29108"/>
        <label>1</label>
    </ligand>
</feature>
<feature type="binding site" evidence="1">
    <location>
        <position position="291"/>
    </location>
    <ligand>
        <name>Ca(2+)</name>
        <dbReference type="ChEBI" id="CHEBI:29108"/>
        <label>1</label>
    </ligand>
</feature>
<feature type="binding site" evidence="1">
    <location>
        <position position="293"/>
    </location>
    <ligand>
        <name>Ca(2+)</name>
        <dbReference type="ChEBI" id="CHEBI:29108"/>
        <label>1</label>
    </ligand>
</feature>
<feature type="binding site" evidence="1">
    <location>
        <position position="370"/>
    </location>
    <ligand>
        <name>Ca(2+)</name>
        <dbReference type="ChEBI" id="CHEBI:29108"/>
        <label>2</label>
    </ligand>
</feature>
<feature type="binding site" evidence="3">
    <location>
        <position position="374"/>
    </location>
    <ligand>
        <name>Zn(2+)</name>
        <dbReference type="ChEBI" id="CHEBI:29105"/>
        <note>catalytic</note>
    </ligand>
</feature>
<feature type="binding site" evidence="3">
    <location>
        <position position="378"/>
    </location>
    <ligand>
        <name>Zn(2+)</name>
        <dbReference type="ChEBI" id="CHEBI:29105"/>
        <note>catalytic</note>
    </ligand>
</feature>
<feature type="binding site" evidence="3">
    <location>
        <position position="398"/>
    </location>
    <ligand>
        <name>Zn(2+)</name>
        <dbReference type="ChEBI" id="CHEBI:29105"/>
        <note>catalytic</note>
    </ligand>
</feature>
<feature type="binding site" evidence="1">
    <location>
        <position position="409"/>
    </location>
    <ligand>
        <name>Ca(2+)</name>
        <dbReference type="ChEBI" id="CHEBI:29108"/>
        <label>2</label>
    </ligand>
</feature>
<feature type="binding site" evidence="1">
    <location>
        <position position="409"/>
    </location>
    <ligand>
        <name>Ca(2+)</name>
        <dbReference type="ChEBI" id="CHEBI:29108"/>
        <label>3</label>
    </ligand>
</feature>
<feature type="binding site" evidence="1">
    <location>
        <position position="415"/>
    </location>
    <ligand>
        <name>Ca(2+)</name>
        <dbReference type="ChEBI" id="CHEBI:29108"/>
        <label>3</label>
    </ligand>
</feature>
<feature type="binding site" evidence="1">
    <location>
        <position position="417"/>
    </location>
    <ligand>
        <name>Ca(2+)</name>
        <dbReference type="ChEBI" id="CHEBI:29108"/>
        <label>2</label>
    </ligand>
</feature>
<feature type="binding site" evidence="1">
    <location>
        <position position="417"/>
    </location>
    <ligand>
        <name>Ca(2+)</name>
        <dbReference type="ChEBI" id="CHEBI:29108"/>
        <label>3</label>
    </ligand>
</feature>
<feature type="binding site" evidence="1">
    <location>
        <position position="419"/>
    </location>
    <ligand>
        <name>Ca(2+)</name>
        <dbReference type="ChEBI" id="CHEBI:29108"/>
        <label>2</label>
    </ligand>
</feature>
<feature type="binding site" evidence="1">
    <location>
        <position position="422"/>
    </location>
    <ligand>
        <name>Ca(2+)</name>
        <dbReference type="ChEBI" id="CHEBI:29108"/>
        <label>2</label>
    </ligand>
</feature>
<feature type="binding site" evidence="1">
    <location>
        <position position="422"/>
    </location>
    <ligand>
        <name>Ca(2+)</name>
        <dbReference type="ChEBI" id="CHEBI:29108"/>
        <label>3</label>
    </ligand>
</feature>
<feature type="binding site" evidence="1">
    <location>
        <position position="425"/>
    </location>
    <ligand>
        <name>Ca(2+)</name>
        <dbReference type="ChEBI" id="CHEBI:29108"/>
        <label>4</label>
    </ligand>
</feature>
<feature type="binding site" evidence="1">
    <location>
        <position position="426"/>
    </location>
    <ligand>
        <name>Ca(2+)</name>
        <dbReference type="ChEBI" id="CHEBI:29108"/>
        <label>4</label>
    </ligand>
</feature>
<feature type="binding site" evidence="1">
    <location>
        <position position="429"/>
    </location>
    <ligand>
        <name>Ca(2+)</name>
        <dbReference type="ChEBI" id="CHEBI:29108"/>
        <label>4</label>
    </ligand>
</feature>
<feature type="binding site" evidence="1">
    <location>
        <position position="432"/>
    </location>
    <ligand>
        <name>Ca(2+)</name>
        <dbReference type="ChEBI" id="CHEBI:29108"/>
        <label>4</label>
    </ligand>
</feature>
<keyword id="KW-0106">Calcium</keyword>
<keyword id="KW-0903">Direct protein sequencing</keyword>
<keyword id="KW-0378">Hydrolase</keyword>
<keyword id="KW-0479">Metal-binding</keyword>
<keyword id="KW-0482">Metalloprotease</keyword>
<keyword id="KW-0645">Protease</keyword>
<keyword id="KW-0964">Secreted</keyword>
<keyword id="KW-0732">Signal</keyword>
<keyword id="KW-0862">Zinc</keyword>
<keyword id="KW-0865">Zymogen</keyword>
<name>NPRT_GEOSE</name>
<proteinExistence type="evidence at protein level"/>
<sequence>MNKRAMLGAIGLAFGLLAAPIGASAKGESIVWNEQWKTPSFVSGSLLNGGEQALEELVYQYVDRENGTFRLGGRARDRLALIGKQTDELGHTVMRFEQRHHGIPVYGTMLAAHVKDGELIALSGSLIPNLDGQPRLKKAKTVTVQQAEAIAEQDVTETVTKERPTTENGERTRLVIYPTDGTARLAYEVNVRFLTPVPGNWVYIIDATDGAILNKFNQIDSRQPGGGQPVAGASTVGVGRGVLGDQKYINTTYSSYYGYYYLQDNTRGSGIFTYDGRNRTVLPGSLWTDGDNQFTASYDAAAVDAHYYAGVVYDYYKNVHGRLSYDGSNAAIRSTVHYGRGYNNAFWNGSQMVYGDGDGQTFLPFSGGIDVVGHELTHAVTDYTAGLVYQNESGAINEAMSDIFGTLVEFYANRNPDWEIGEDIYTPGVAGDALRSMSDPAKYGDPDHYSKRYTGTQDNGGVHTNSGIINKAAYLLSQGGVHYGVSVNGIGRDKMGKIFYRALVYYLTPTSNFSQLRAACVQAAADLYGSTSQEVNSVKQAFNAVGVY</sequence>
<gene>
    <name type="primary">nprT</name>
</gene>
<reference key="1">
    <citation type="journal article" date="1985" name="J. Bacteriol.">
        <title>Nucleotide sequence and promoter region for the neutral protease gene from Bacillus stearothermophilus.</title>
        <authorList>
            <person name="Takagi M."/>
            <person name="Imanaka T."/>
            <person name="Aiba S."/>
        </authorList>
    </citation>
    <scope>NUCLEOTIDE SEQUENCE [GENOMIC DNA]</scope>
    <scope>PROTEIN SEQUENCE OF 230-243</scope>
    <scope>DETERMINATION OF TRANSCRIPTIONAL START SITE</scope>
    <source>
        <strain>CU21</strain>
    </source>
</reference>
<reference key="2">
    <citation type="journal article" date="1983" name="J. Bacteriol.">
        <title>Molecular cloning of a thermostable neutral protease gene from Bacillus stearothermophilus in a vector plasmid and its expression in Bacillus stearothermophilus and Bacillus subtilis.</title>
        <authorList>
            <person name="Fujii M."/>
            <person name="Takagi M."/>
            <person name="Imanaka T."/>
            <person name="Aiba S."/>
        </authorList>
    </citation>
    <scope>FUNCTION AS A PROTEASE</scope>
    <scope>COFACTOR</scope>
    <scope>BIOPHYSICOCHEMICAL PROPERTIES</scope>
    <scope>SUBCELLULAR LOCATION</scope>
    <source>
        <strain>CU21</strain>
    </source>
</reference>
<dbReference type="EC" id="3.4.24.-"/>
<dbReference type="EMBL" id="M11446">
    <property type="protein sequence ID" value="AAA22621.1"/>
    <property type="molecule type" value="Genomic_DNA"/>
</dbReference>
<dbReference type="PIR" id="A24924">
    <property type="entry name" value="HYBSS"/>
</dbReference>
<dbReference type="SMR" id="P06874"/>
<dbReference type="MEROPS" id="M04.018"/>
<dbReference type="KEGG" id="ag:AAA22621"/>
<dbReference type="GO" id="GO:0005576">
    <property type="term" value="C:extracellular region"/>
    <property type="evidence" value="ECO:0007669"/>
    <property type="project" value="UniProtKB-SubCell"/>
</dbReference>
<dbReference type="GO" id="GO:0046872">
    <property type="term" value="F:metal ion binding"/>
    <property type="evidence" value="ECO:0007669"/>
    <property type="project" value="UniProtKB-KW"/>
</dbReference>
<dbReference type="GO" id="GO:0004222">
    <property type="term" value="F:metalloendopeptidase activity"/>
    <property type="evidence" value="ECO:0007669"/>
    <property type="project" value="InterPro"/>
</dbReference>
<dbReference type="GO" id="GO:0006508">
    <property type="term" value="P:proteolysis"/>
    <property type="evidence" value="ECO:0007669"/>
    <property type="project" value="UniProtKB-KW"/>
</dbReference>
<dbReference type="CDD" id="cd09597">
    <property type="entry name" value="M4_TLP"/>
    <property type="match status" value="1"/>
</dbReference>
<dbReference type="FunFam" id="1.10.390.10:FF:000012">
    <property type="entry name" value="Thermolysin"/>
    <property type="match status" value="1"/>
</dbReference>
<dbReference type="Gene3D" id="3.10.170.10">
    <property type="match status" value="1"/>
</dbReference>
<dbReference type="Gene3D" id="3.10.450.40">
    <property type="match status" value="1"/>
</dbReference>
<dbReference type="Gene3D" id="3.10.450.490">
    <property type="match status" value="1"/>
</dbReference>
<dbReference type="Gene3D" id="1.10.390.10">
    <property type="entry name" value="Neutral Protease Domain 2"/>
    <property type="match status" value="1"/>
</dbReference>
<dbReference type="InterPro" id="IPR011096">
    <property type="entry name" value="FTP_domain"/>
</dbReference>
<dbReference type="InterPro" id="IPR025711">
    <property type="entry name" value="PepSY"/>
</dbReference>
<dbReference type="InterPro" id="IPR023612">
    <property type="entry name" value="Peptidase_M4"/>
</dbReference>
<dbReference type="InterPro" id="IPR027268">
    <property type="entry name" value="Peptidase_M4/M1_CTD_sf"/>
</dbReference>
<dbReference type="InterPro" id="IPR001570">
    <property type="entry name" value="Peptidase_M4_C_domain"/>
</dbReference>
<dbReference type="InterPro" id="IPR013856">
    <property type="entry name" value="Peptidase_M4_domain"/>
</dbReference>
<dbReference type="InterPro" id="IPR050728">
    <property type="entry name" value="Zinc_Metalloprotease_M4"/>
</dbReference>
<dbReference type="PANTHER" id="PTHR33794">
    <property type="entry name" value="BACILLOLYSIN"/>
    <property type="match status" value="1"/>
</dbReference>
<dbReference type="PANTHER" id="PTHR33794:SF3">
    <property type="entry name" value="NEUTRAL PROTEASE B"/>
    <property type="match status" value="1"/>
</dbReference>
<dbReference type="Pfam" id="PF07504">
    <property type="entry name" value="FTP"/>
    <property type="match status" value="1"/>
</dbReference>
<dbReference type="Pfam" id="PF03413">
    <property type="entry name" value="PepSY"/>
    <property type="match status" value="1"/>
</dbReference>
<dbReference type="Pfam" id="PF01447">
    <property type="entry name" value="Peptidase_M4"/>
    <property type="match status" value="1"/>
</dbReference>
<dbReference type="Pfam" id="PF02868">
    <property type="entry name" value="Peptidase_M4_C"/>
    <property type="match status" value="1"/>
</dbReference>
<dbReference type="PRINTS" id="PR00730">
    <property type="entry name" value="THERMOLYSIN"/>
</dbReference>
<dbReference type="SUPFAM" id="SSF55486">
    <property type="entry name" value="Metalloproteases ('zincins'), catalytic domain"/>
    <property type="match status" value="1"/>
</dbReference>
<dbReference type="PROSITE" id="PS00142">
    <property type="entry name" value="ZINC_PROTEASE"/>
    <property type="match status" value="1"/>
</dbReference>